<dbReference type="EMBL" id="BC129783">
    <property type="protein sequence ID" value="AAI29784.1"/>
    <property type="status" value="ALT_INIT"/>
    <property type="molecule type" value="mRNA"/>
</dbReference>
<dbReference type="SMR" id="A1L2Y1"/>
<dbReference type="GeneID" id="100036986"/>
<dbReference type="KEGG" id="xla:100036986"/>
<dbReference type="AGR" id="Xenbase:XB-GENE-6255839"/>
<dbReference type="CTD" id="100036986"/>
<dbReference type="Xenbase" id="XB-GENE-6255839">
    <property type="gene designation" value="fsip1.L"/>
</dbReference>
<dbReference type="OMA" id="EPASCKV"/>
<dbReference type="OrthoDB" id="9946895at2759"/>
<dbReference type="Proteomes" id="UP000186698">
    <property type="component" value="Chromosome 8L"/>
</dbReference>
<dbReference type="Bgee" id="100036986">
    <property type="expression patterns" value="Expressed in testis and 17 other cell types or tissues"/>
</dbReference>
<dbReference type="InterPro" id="IPR026246">
    <property type="entry name" value="Fsip1"/>
</dbReference>
<dbReference type="PANTHER" id="PTHR22012">
    <property type="entry name" value="FIBROUS SHEATH INTERACTING PROTEIN 1"/>
    <property type="match status" value="1"/>
</dbReference>
<dbReference type="PANTHER" id="PTHR22012:SF2">
    <property type="entry name" value="FIBROUS SHEATH-INTERACTING PROTEIN 1"/>
    <property type="match status" value="1"/>
</dbReference>
<dbReference type="Pfam" id="PF15554">
    <property type="entry name" value="FSIP1"/>
    <property type="match status" value="1"/>
</dbReference>
<dbReference type="PRINTS" id="PR02075">
    <property type="entry name" value="FIBSHEATHIP1"/>
</dbReference>
<comment type="similarity">
    <text evidence="3">Belongs to the FSIP1 family.</text>
</comment>
<comment type="sequence caution" evidence="3">
    <conflict type="erroneous initiation">
        <sequence resource="EMBL-CDS" id="AAI29784"/>
    </conflict>
</comment>
<organism>
    <name type="scientific">Xenopus laevis</name>
    <name type="common">African clawed frog</name>
    <dbReference type="NCBI Taxonomy" id="8355"/>
    <lineage>
        <taxon>Eukaryota</taxon>
        <taxon>Metazoa</taxon>
        <taxon>Chordata</taxon>
        <taxon>Craniata</taxon>
        <taxon>Vertebrata</taxon>
        <taxon>Euteleostomi</taxon>
        <taxon>Amphibia</taxon>
        <taxon>Batrachia</taxon>
        <taxon>Anura</taxon>
        <taxon>Pipoidea</taxon>
        <taxon>Pipidae</taxon>
        <taxon>Xenopodinae</taxon>
        <taxon>Xenopus</taxon>
        <taxon>Xenopus</taxon>
    </lineage>
</organism>
<reference key="1">
    <citation type="submission" date="2006-12" db="EMBL/GenBank/DDBJ databases">
        <authorList>
            <consortium name="NIH - Xenopus Gene Collection (XGC) project"/>
        </authorList>
    </citation>
    <scope>NUCLEOTIDE SEQUENCE [LARGE SCALE MRNA]</scope>
    <source>
        <tissue>Thymus</tissue>
    </source>
</reference>
<evidence type="ECO:0000255" key="1"/>
<evidence type="ECO:0000256" key="2">
    <source>
        <dbReference type="SAM" id="MobiDB-lite"/>
    </source>
</evidence>
<evidence type="ECO:0000305" key="3"/>
<proteinExistence type="evidence at transcript level"/>
<accession>A1L2Y1</accession>
<keyword id="KW-0175">Coiled coil</keyword>
<keyword id="KW-1185">Reference proteome</keyword>
<feature type="chain" id="PRO_0000314923" description="Fibrous sheath-interacting protein 1">
    <location>
        <begin position="1"/>
        <end position="459"/>
    </location>
</feature>
<feature type="region of interest" description="Disordered" evidence="2">
    <location>
        <begin position="1"/>
        <end position="54"/>
    </location>
</feature>
<feature type="region of interest" description="Disordered" evidence="2">
    <location>
        <begin position="252"/>
        <end position="289"/>
    </location>
</feature>
<feature type="coiled-coil region" evidence="1">
    <location>
        <begin position="162"/>
        <end position="202"/>
    </location>
</feature>
<feature type="compositionally biased region" description="Low complexity" evidence="2">
    <location>
        <begin position="13"/>
        <end position="29"/>
    </location>
</feature>
<feature type="compositionally biased region" description="Basic and acidic residues" evidence="2">
    <location>
        <begin position="276"/>
        <end position="289"/>
    </location>
</feature>
<name>FSIP1_XENLA</name>
<sequence>MDITKGSLDEIARPASSSRSRPGSRVSTSLSTEKPKRSSTSLSLEILNPEPGFSEMPSQLCLGLETCETHLEAGRKTPIEHHDQLLGQKHFSKNSAEDYECHRRDEINFDHPFPQKEIDLLSHESEDEFLDLPSAEFEDACENDEDPKDDQDIADDKAIDPKMERAIKRMQALDDILQRKLAKEKEVKAQGLEIRIKLWEELQRATIQSSARSHEENMNTSKFLALTPQLDEMEDAASVQMCNIFSPVFPTQLPNEDPVEDDDHKTLQGNMTGADSSDRSDCKTRHSKGQKKEVDFIQRNIELAKDAGAYILLMDDEKLRLEQLLEDIQEGCSDEDITGDVSGWIVPGEGYTPEPDEYDQLAEIDSRLQMVRCSEESLETSLSDSRILKEVFQEVLLEKNGNSDSAPGEQVLRNTKELRDQKMRLREIDQQLQDMERNSITPMSLVSRYSFSADSPVYA</sequence>
<protein>
    <recommendedName>
        <fullName>Fibrous sheath-interacting protein 1</fullName>
    </recommendedName>
</protein>
<gene>
    <name type="primary">fsip1</name>
</gene>